<sequence>MAQAGRSGDAFASLDQRRERQEEQAQSGLDKVFYFQGVVELFNRMKIAYGRTPAWTALMKCNAIYLKDFKTAVGVEGTRYGLFFAEEVTKPTWSPDIGANLITLGEKACLDAQNAKYERLQASLKTTSGLVHQVMEKTREAKENLEKANKIQEQLDKVIESNKALHRKIQERNREKMQEYMVRLHNTQKDRDDWVQRCSRLEQENVTLQKRLKEKENALVSVGWDLLGWIVISVLVFGLISLADAQNLTPPAKIVITPGQAEFMDLAKLEKIQVRKYRLDSCELPPEKGCVLYKDYLTTRPVSFLELMAKCSKPDWVSESSYNETTLMEECIQIFGAEWCEGKLVDLVPRKCGEQHVLVNIIEQIEKTREVVTLIYGKVMSYRLDMWITSIFSLVLAGNKEKLFKMAPFIFVAWFLNIPVFLTCVAVNIFPVVSLPFILFQIFMPQFVLVNAFLLWLTLTLTAFYWSEGPKILMEISYALVYTIGFVLWSLGLAVGVTLKLTMVHQILMFCVVAAAICGTKFACTTITVQHPDGTTAKYTRVGKLKNNVVNQCKKVVTTLQTRGVIPATPAKTASIVIVEGKNGTGVGFRFMNYILTAEHVVQGSDIATLKNGSVSVKSKVIKTIPIFESVDNVAVLKLPPELNSVKPIKLAKKVQSDYLTLTAYDPNFQHAATFTGWCIIDGNWLNNSFDTKFGNSGAPYCDHDGRLVGIHLGTQGVLSQGIVIVDALKNTFQLADQCRPQNFDMDEFLEKVIAGTKVSHAAILKELEELREEVQFLKKKCVTYDDYWLCQTIFGQAKGKTKKTVRGRKHLVTKRALGKGHFMKMRMLTDEEYQNMIEKGFSAEEIREAVNALREQAWLNYCIDNDVDDEGEEDWYDDMVETDRVNQEIDEAIERAMEDRGEFYQKKSRLTFVEQAMMHLIQVSKERSQTAKLEVQKENEAQLVKMFERCVTDENTPEGTTSIAALSTEDDVRLVEGKVIDFTKAKNIPVDGEIRREIIPGTKCTEISTGPENKKNILKKKDTHIAEGKVETKSSQQPVDVKDDKPVALEQRKPRACKWCGSSQKHDYRECRFQREKRFCVYCAAMHSMFEGHIRPIECTSCKKSFSGIEKLEDHVVSGECQKN</sequence>
<evidence type="ECO:0000250" key="1"/>
<evidence type="ECO:0000250" key="2">
    <source>
        <dbReference type="UniProtKB" id="P0C6K4"/>
    </source>
</evidence>
<evidence type="ECO:0000250" key="3">
    <source>
        <dbReference type="UniProtKB" id="Q3ZN07"/>
    </source>
</evidence>
<evidence type="ECO:0000255" key="4"/>
<evidence type="ECO:0000305" key="5"/>
<organism>
    <name type="scientific">Turkey astrovirus 2</name>
    <name type="common">TAstV-2</name>
    <dbReference type="NCBI Taxonomy" id="246343"/>
    <lineage>
        <taxon>Viruses</taxon>
        <taxon>Riboviria</taxon>
        <taxon>Orthornavirae</taxon>
        <taxon>Pisuviricota</taxon>
        <taxon>Stelpaviricetes</taxon>
        <taxon>Stellavirales</taxon>
        <taxon>Astroviridae</taxon>
        <taxon>Avastrovirus</taxon>
        <taxon>Avastrovirus 3</taxon>
    </lineage>
</organism>
<gene>
    <name type="primary">ORF1</name>
</gene>
<name>NS1A_TASV2</name>
<accession>Q9ILI6</accession>
<organismHost>
    <name type="scientific">Meleagris gallopavo</name>
    <name type="common">Wild turkey</name>
    <dbReference type="NCBI Taxonomy" id="9103"/>
</organismHost>
<feature type="chain" id="PRO_0000327360" description="Non-structural polyprotein 1A">
    <location>
        <begin position="1"/>
        <end position="1125"/>
    </location>
</feature>
<feature type="chain" id="PRO_0000327361" description="Protein p19" evidence="4">
    <location>
        <begin position="1"/>
        <end position="170"/>
    </location>
</feature>
<feature type="chain" id="PRO_0000327362" description="Transmembrane protein 1A" evidence="4">
    <location>
        <begin position="171"/>
        <end position="552"/>
    </location>
</feature>
<feature type="chain" id="PRO_0000327363" description="Serine protease p27" evidence="4">
    <location>
        <begin position="553"/>
        <end position="797"/>
    </location>
</feature>
<feature type="chain" id="PRO_0000419602" description="Viral genome-linked protein" evidence="4">
    <location>
        <begin position="798"/>
        <end position="916"/>
    </location>
</feature>
<feature type="chain" id="PRO_0000327364" description="Protein p20'" evidence="4">
    <location>
        <begin position="917"/>
        <end position="1125"/>
    </location>
</feature>
<feature type="transmembrane region" description="Helical" evidence="4">
    <location>
        <begin position="220"/>
        <end position="240"/>
    </location>
</feature>
<feature type="transmembrane region" description="Helical" evidence="4">
    <location>
        <begin position="379"/>
        <end position="398"/>
    </location>
</feature>
<feature type="transmembrane region" description="Helical" evidence="4">
    <location>
        <begin position="407"/>
        <end position="427"/>
    </location>
</feature>
<feature type="transmembrane region" description="Helical" evidence="4">
    <location>
        <begin position="437"/>
        <end position="457"/>
    </location>
</feature>
<feature type="transmembrane region" description="Helical" evidence="4">
    <location>
        <begin position="479"/>
        <end position="499"/>
    </location>
</feature>
<feature type="transmembrane region" description="Helical" evidence="4">
    <location>
        <begin position="507"/>
        <end position="527"/>
    </location>
</feature>
<feature type="coiled-coil region" evidence="4">
    <location>
        <begin position="131"/>
        <end position="218"/>
    </location>
</feature>
<feature type="active site" description="Charge relay system; for serine protease activity" evidence="1">
    <location>
        <position position="600"/>
    </location>
</feature>
<feature type="active site" description="Charge relay system; for serine protease activity" evidence="1">
    <location>
        <position position="632"/>
    </location>
</feature>
<feature type="active site" description="Charge relay system; for serine protease activity" evidence="1">
    <location>
        <position position="697"/>
    </location>
</feature>
<feature type="site" description="Cleavage" evidence="4">
    <location>
        <begin position="170"/>
        <end position="171"/>
    </location>
</feature>
<feature type="site" description="Cleavage" evidence="4">
    <location>
        <begin position="552"/>
        <end position="553"/>
    </location>
</feature>
<feature type="site" description="Cleavage" evidence="4">
    <location>
        <begin position="797"/>
        <end position="798"/>
    </location>
</feature>
<feature type="site" description="Cleavage" evidence="4">
    <location>
        <begin position="916"/>
        <end position="917"/>
    </location>
</feature>
<feature type="modified residue" description="O-(5'-phospho-RNA)-tyrosine" evidence="3">
    <location>
        <position position="834"/>
    </location>
</feature>
<comment type="function">
    <molecule>Serine protease p27</molecule>
    <text evidence="2">Responsible for the cleavage of the polyprotein into functional products.</text>
</comment>
<comment type="function">
    <molecule>Viral genome-linked protein</molecule>
    <text evidence="3">Protein covalently attached to the 5' extremity of the genomic and subgenomic RNAs (By similarity). It may serve as a primer for the replicase (By similarity).</text>
</comment>
<comment type="catalytic activity">
    <reaction>
        <text>RNA(n) + a ribonucleoside 5'-triphosphate = RNA(n+1) + diphosphate</text>
        <dbReference type="Rhea" id="RHEA:21248"/>
        <dbReference type="Rhea" id="RHEA-COMP:14527"/>
        <dbReference type="Rhea" id="RHEA-COMP:17342"/>
        <dbReference type="ChEBI" id="CHEBI:33019"/>
        <dbReference type="ChEBI" id="CHEBI:61557"/>
        <dbReference type="ChEBI" id="CHEBI:140395"/>
    </reaction>
</comment>
<comment type="subunit">
    <molecule>Serine protease p27</molecule>
    <text evidence="2">Monomer.</text>
</comment>
<comment type="subcellular location">
    <molecule>Transmembrane protein 1A</molecule>
    <subcellularLocation>
        <location evidence="5">Host membrane</location>
        <topology evidence="5">Multi-pass membrane protein</topology>
    </subcellularLocation>
</comment>
<comment type="alternative products">
    <event type="ribosomal frameshifting"/>
    <isoform>
        <id>Q9ILI6-1</id>
        <name>nsp1a</name>
        <sequence type="displayed"/>
    </isoform>
    <isoform>
        <id>Q9ILI5-1</id>
        <name>nsp1ab</name>
        <sequence type="external"/>
    </isoform>
</comment>
<comment type="PTM">
    <text evidence="2">Cleaved by the viral and host proteases (By similarity). The protease is probably autocatalytically cleaved (By similarity).</text>
</comment>
<comment type="similarity">
    <text evidence="5">Belongs to the astroviridae polyprotein 1A family.</text>
</comment>
<reference key="1">
    <citation type="journal article" date="2000" name="J. Virol.">
        <title>Molecular characterization of an avian astrovirus.</title>
        <authorList>
            <person name="Koci M.D."/>
            <person name="Seal B.S."/>
            <person name="Schultz-Cherry S."/>
        </authorList>
    </citation>
    <scope>NUCLEOTIDE SEQUENCE [GENOMIC RNA]</scope>
</reference>
<proteinExistence type="inferred from homology"/>
<protein>
    <recommendedName>
        <fullName>Non-structural polyprotein 1A</fullName>
    </recommendedName>
    <component>
        <recommendedName>
            <fullName>Protein p19</fullName>
        </recommendedName>
    </component>
    <component>
        <recommendedName>
            <fullName>Transmembrane protein 1A</fullName>
        </recommendedName>
    </component>
    <component>
        <recommendedName>
            <fullName>Serine protease p27</fullName>
            <shortName>p27</shortName>
            <ecNumber evidence="2">3.4.21.-</ecNumber>
        </recommendedName>
    </component>
    <component>
        <recommendedName>
            <fullName>Viral genome-linked protein</fullName>
        </recommendedName>
        <alternativeName>
            <fullName>VPg</fullName>
        </alternativeName>
    </component>
    <component>
        <recommendedName>
            <fullName>Protein p20'</fullName>
        </recommendedName>
    </component>
</protein>
<dbReference type="EC" id="3.4.21.-" evidence="2"/>
<dbReference type="EMBL" id="AF206663">
    <property type="protein sequence ID" value="AAF18462.2"/>
    <property type="molecule type" value="Genomic_RNA"/>
</dbReference>
<dbReference type="RefSeq" id="NP_987086.1">
    <molecule id="Q9ILI6-1"/>
    <property type="nucleotide sequence ID" value="NC_005790.1"/>
</dbReference>
<dbReference type="SMR" id="Q9ILI6"/>
<dbReference type="Proteomes" id="UP000007235">
    <property type="component" value="Segment"/>
</dbReference>
<dbReference type="GO" id="GO:0033644">
    <property type="term" value="C:host cell membrane"/>
    <property type="evidence" value="ECO:0007669"/>
    <property type="project" value="UniProtKB-SubCell"/>
</dbReference>
<dbReference type="GO" id="GO:0016020">
    <property type="term" value="C:membrane"/>
    <property type="evidence" value="ECO:0007669"/>
    <property type="project" value="UniProtKB-KW"/>
</dbReference>
<dbReference type="GO" id="GO:0034062">
    <property type="term" value="F:5'-3' RNA polymerase activity"/>
    <property type="evidence" value="ECO:0007669"/>
    <property type="project" value="RHEA"/>
</dbReference>
<dbReference type="GO" id="GO:0008236">
    <property type="term" value="F:serine-type peptidase activity"/>
    <property type="evidence" value="ECO:0007669"/>
    <property type="project" value="UniProtKB-KW"/>
</dbReference>
<dbReference type="GO" id="GO:0006508">
    <property type="term" value="P:proteolysis"/>
    <property type="evidence" value="ECO:0007669"/>
    <property type="project" value="UniProtKB-KW"/>
</dbReference>
<dbReference type="GO" id="GO:0075523">
    <property type="term" value="P:viral translational frameshifting"/>
    <property type="evidence" value="ECO:0007669"/>
    <property type="project" value="UniProtKB-KW"/>
</dbReference>
<dbReference type="Gene3D" id="2.40.10.10">
    <property type="entry name" value="Trypsin-like serine proteases"/>
    <property type="match status" value="2"/>
</dbReference>
<dbReference type="InterPro" id="IPR045836">
    <property type="entry name" value="Astro_VPg"/>
</dbReference>
<dbReference type="InterPro" id="IPR009003">
    <property type="entry name" value="Peptidase_S1_PA"/>
</dbReference>
<dbReference type="InterPro" id="IPR043504">
    <property type="entry name" value="Peptidase_S1_PA_chymotrypsin"/>
</dbReference>
<dbReference type="Pfam" id="PF19416">
    <property type="entry name" value="Astro_VPg"/>
    <property type="match status" value="1"/>
</dbReference>
<dbReference type="Pfam" id="PF13365">
    <property type="entry name" value="Trypsin_2"/>
    <property type="match status" value="1"/>
</dbReference>
<dbReference type="SUPFAM" id="SSF50494">
    <property type="entry name" value="Trypsin-like serine proteases"/>
    <property type="match status" value="1"/>
</dbReference>
<keyword id="KW-0175">Coiled coil</keyword>
<keyword id="KW-0191">Covalent protein-RNA linkage</keyword>
<keyword id="KW-1043">Host membrane</keyword>
<keyword id="KW-0378">Hydrolase</keyword>
<keyword id="KW-0472">Membrane</keyword>
<keyword id="KW-0597">Phosphoprotein</keyword>
<keyword id="KW-0645">Protease</keyword>
<keyword id="KW-0688">Ribosomal frameshifting</keyword>
<keyword id="KW-0720">Serine protease</keyword>
<keyword id="KW-0812">Transmembrane</keyword>
<keyword id="KW-1133">Transmembrane helix</keyword>
<keyword id="KW-0693">Viral RNA replication</keyword>